<sequence length="1128" mass="125772">MAECGRGAAGGALPTSPSPALGAKGALKAGAGEGGGGGGGGRLGHGRARYDSGGVSNGDCSLGVSGDEARTSPGRGPLGVALARTPSPAAGPVPRDSKPGGLPRRSSIIKDGTKQKRERKKTVSFSSMPTEKKISSASDCINSMVEGSELKKVRSNSRIYHRYFLLDADMQSLRWEPSKKDSEKAKIDIKSIKEVRTGKNTDIFRSNGISEQISEDCAFSVIYGENYESLDLVANSADVANIWVTGLRYLISYGKHTLDMLESSQDNMRTSWISQMFSEIDVDGLGHITLCHAVQCIRNLNPGLKTSKIELKFKELHKSKDKAGTEITKEEFIEVFHELCTRPEIYFLLVQFSSNKEFLDTKDLMMFLEAEQGVAHINEEISLEIIHKYEPSKEGQEKGWLSIDGFTNYLMSPDCYIFDPEHKKVCQDMKQPLSHYFINSSHNTYLIEDQFRGPSDITGYIRALKMGCRSVELDVWDGPDNEPVIYTGHTMTSQIVFRSVIDIINKYAFFASEYPLILCLENHCSIKQQKVMVQHMKKILGDKLYTTSPNMEESYLPSPDVLKGKILIKAKKLSSNCSGVEGDVTDEDEGAEMSQRMGKENVEQPNHVPVKRFQLCKELSELVSICKSVQFKEFQVSFQVQKYWEVCSFNEVLASKYANENPGDFVNYNKRFLARVFPSPMRIDSSNMNPQDFWKCGCQIVAMNFQTPGLMMDLNVGWFRQNGNCGYVLRPAIMREEVSFFSANTKDSVPGVSPQLLHIKIISGQNFPKPKGSGAKGDVVDPYVYVEIHGIPADCAEQRTKTVNQNGDAPIFDESFEFQINLPELAMVRFVVLDDDYIGDEFIGQYTIPFECLQTGYRHVPLQSLTGEVLAHASLFVHVAITNRRGGGKPHKRGLSVRKGKKSREYASLRTLWIKTVDEVFKNAQPPIRDATDLRENMQNAVVSFKELCGLSSVANLMQCMLAVSPRFLGPDNNPLVVLNLSEPYPTMELQAIVPEVLKKIVTTYDMMMQSLKALIENADAVYEKIVHCQKAAMEFHEHLHSIGTKEGLKERKLQKAVESFTWNITILKGQADLLKYAKNETLENLKQIHFAAVSCGLNKPGTENSEAQKPRRSLEAIPEKASDENGD</sequence>
<protein>
    <recommendedName>
        <fullName>Inactive phospholipase C-like protein 2</fullName>
        <shortName>PLC-L(2)</shortName>
        <shortName>PLC-L2</shortName>
        <shortName>Phospholipase C-L2</shortName>
    </recommendedName>
    <alternativeName>
        <fullName>Phospholipase C-epsilon-2</fullName>
        <shortName>PLC-epsilon-2</shortName>
    </alternativeName>
</protein>
<evidence type="ECO:0000250" key="1">
    <source>
        <dbReference type="UniProtKB" id="Q9UPR0"/>
    </source>
</evidence>
<evidence type="ECO:0000255" key="2">
    <source>
        <dbReference type="PROSITE-ProRule" id="PRU00041"/>
    </source>
</evidence>
<evidence type="ECO:0000255" key="3">
    <source>
        <dbReference type="PROSITE-ProRule" id="PRU00145"/>
    </source>
</evidence>
<evidence type="ECO:0000255" key="4">
    <source>
        <dbReference type="PROSITE-ProRule" id="PRU00270"/>
    </source>
</evidence>
<evidence type="ECO:0000255" key="5">
    <source>
        <dbReference type="PROSITE-ProRule" id="PRU00271"/>
    </source>
</evidence>
<evidence type="ECO:0000256" key="6">
    <source>
        <dbReference type="SAM" id="MobiDB-lite"/>
    </source>
</evidence>
<evidence type="ECO:0000269" key="7">
    <source>
    </source>
</evidence>
<evidence type="ECO:0000305" key="8"/>
<evidence type="ECO:0007744" key="9">
    <source>
    </source>
</evidence>
<evidence type="ECO:0007744" key="10">
    <source>
    </source>
</evidence>
<keyword id="KW-0007">Acetylation</keyword>
<keyword id="KW-0963">Cytoplasm</keyword>
<keyword id="KW-0597">Phosphoprotein</keyword>
<keyword id="KW-1185">Reference proteome</keyword>
<keyword id="KW-0807">Transducer</keyword>
<organism>
    <name type="scientific">Mus musculus</name>
    <name type="common">Mouse</name>
    <dbReference type="NCBI Taxonomy" id="10090"/>
    <lineage>
        <taxon>Eukaryota</taxon>
        <taxon>Metazoa</taxon>
        <taxon>Chordata</taxon>
        <taxon>Craniata</taxon>
        <taxon>Vertebrata</taxon>
        <taxon>Euteleostomi</taxon>
        <taxon>Mammalia</taxon>
        <taxon>Eutheria</taxon>
        <taxon>Euarchontoglires</taxon>
        <taxon>Glires</taxon>
        <taxon>Rodentia</taxon>
        <taxon>Myomorpha</taxon>
        <taxon>Muroidea</taxon>
        <taxon>Muridae</taxon>
        <taxon>Murinae</taxon>
        <taxon>Mus</taxon>
        <taxon>Mus</taxon>
    </lineage>
</organism>
<feature type="initiator methionine" description="Removed" evidence="1">
    <location>
        <position position="1"/>
    </location>
</feature>
<feature type="chain" id="PRO_0000288852" description="Inactive phospholipase C-like protein 2">
    <location>
        <begin position="2"/>
        <end position="1128"/>
    </location>
</feature>
<feature type="domain" description="PH" evidence="3">
    <location>
        <begin position="142"/>
        <end position="252"/>
    </location>
</feature>
<feature type="domain" description="PI-PLC X-box" evidence="4">
    <location>
        <begin position="427"/>
        <end position="571"/>
    </location>
</feature>
<feature type="domain" description="PI-PLC Y-box" evidence="5">
    <location>
        <begin position="619"/>
        <end position="735"/>
    </location>
</feature>
<feature type="domain" description="C2" evidence="2">
    <location>
        <begin position="735"/>
        <end position="864"/>
    </location>
</feature>
<feature type="region of interest" description="Disordered" evidence="6">
    <location>
        <begin position="1"/>
        <end position="129"/>
    </location>
</feature>
<feature type="region of interest" description="Disordered" evidence="6">
    <location>
        <begin position="1100"/>
        <end position="1128"/>
    </location>
</feature>
<feature type="compositionally biased region" description="Low complexity" evidence="6">
    <location>
        <begin position="20"/>
        <end position="30"/>
    </location>
</feature>
<feature type="compositionally biased region" description="Gly residues" evidence="6">
    <location>
        <begin position="31"/>
        <end position="43"/>
    </location>
</feature>
<feature type="compositionally biased region" description="Basic and acidic residues" evidence="6">
    <location>
        <begin position="1107"/>
        <end position="1128"/>
    </location>
</feature>
<feature type="modified residue" description="N-acetylalanine" evidence="1">
    <location>
        <position position="2"/>
    </location>
</feature>
<feature type="modified residue" description="Phosphoserine" evidence="1">
    <location>
        <position position="16"/>
    </location>
</feature>
<feature type="modified residue" description="Phosphothreonine" evidence="10">
    <location>
        <position position="85"/>
    </location>
</feature>
<feature type="modified residue" description="Phosphothreonine" evidence="9 10">
    <location>
        <position position="585"/>
    </location>
</feature>
<feature type="modified residue" description="Phosphoserine" evidence="10">
    <location>
        <position position="1114"/>
    </location>
</feature>
<feature type="sequence conflict" description="In Ref. 1; BAA89457." evidence="8" ref="1">
    <original>N</original>
    <variation>H</variation>
    <location>
        <position position="142"/>
    </location>
</feature>
<feature type="sequence conflict" description="In Ref. 3; AAH27746." evidence="8" ref="3">
    <original>I</original>
    <variation>V</variation>
    <location>
        <position position="273"/>
    </location>
</feature>
<feature type="sequence conflict" description="In Ref. 1; BAA89457." evidence="8" ref="1">
    <original>C</original>
    <variation>R</variation>
    <location>
        <position position="340"/>
    </location>
</feature>
<feature type="sequence conflict" description="In Ref. 2; BAE32490." evidence="8" ref="2">
    <original>D</original>
    <variation>N</variation>
    <location>
        <position position="449"/>
    </location>
</feature>
<feature type="sequence conflict" description="In Ref. 1; BAA89457." evidence="8" ref="1">
    <original>I</original>
    <variation>V</variation>
    <location>
        <position position="485"/>
    </location>
</feature>
<feature type="sequence conflict" description="In Ref. 1; BAA89457." evidence="8" ref="1">
    <original>EQ</original>
    <variation>AD</variation>
    <location>
        <begin position="797"/>
        <end position="798"/>
    </location>
</feature>
<name>PLCL2_MOUSE</name>
<proteinExistence type="evidence at protein level"/>
<comment type="function">
    <text evidence="7">May play an role in the regulation of Ins(1,4,5)P3 around the endoplasmic reticulum.</text>
</comment>
<comment type="subcellular location">
    <subcellularLocation>
        <location evidence="7">Cytoplasm</location>
    </subcellularLocation>
    <text>Predominantly localized to perinuclear areas in both myoblast and myotube C2C12 cells.</text>
</comment>
<comment type="tissue specificity">
    <text evidence="7">Ubiquitously expressed, with a strong expression in skeletal muscle.</text>
</comment>
<comment type="caution">
    <text evidence="8">In the PI-PLC X-box Thr-487 is present instead of the conserved His which is one of the active site residues. It is therefore expected that this protein lacks catalytic activity.</text>
</comment>
<accession>Q8K394</accession>
<accession>Q3U4E2</accession>
<accession>Q80TK5</accession>
<accession>Q9QYG1</accession>
<reference key="1">
    <citation type="journal article" date="1999" name="Biochem. Biophys. Res. Commun.">
        <title>Identification and characterization of a new phospholipase C-like protein, PLC-L(2).</title>
        <authorList>
            <person name="Otsuki M."/>
            <person name="Fukami K."/>
            <person name="Kohno T."/>
            <person name="Yokota J."/>
            <person name="Takenawa T."/>
        </authorList>
    </citation>
    <scope>NUCLEOTIDE SEQUENCE [MRNA]</scope>
    <scope>TISSUE SPECIFICITY</scope>
    <scope>SUBCELLULAR LOCATION</scope>
    <scope>FUNCTION</scope>
</reference>
<reference key="2">
    <citation type="journal article" date="2005" name="Science">
        <title>The transcriptional landscape of the mammalian genome.</title>
        <authorList>
            <person name="Carninci P."/>
            <person name="Kasukawa T."/>
            <person name="Katayama S."/>
            <person name="Gough J."/>
            <person name="Frith M.C."/>
            <person name="Maeda N."/>
            <person name="Oyama R."/>
            <person name="Ravasi T."/>
            <person name="Lenhard B."/>
            <person name="Wells C."/>
            <person name="Kodzius R."/>
            <person name="Shimokawa K."/>
            <person name="Bajic V.B."/>
            <person name="Brenner S.E."/>
            <person name="Batalov S."/>
            <person name="Forrest A.R."/>
            <person name="Zavolan M."/>
            <person name="Davis M.J."/>
            <person name="Wilming L.G."/>
            <person name="Aidinis V."/>
            <person name="Allen J.E."/>
            <person name="Ambesi-Impiombato A."/>
            <person name="Apweiler R."/>
            <person name="Aturaliya R.N."/>
            <person name="Bailey T.L."/>
            <person name="Bansal M."/>
            <person name="Baxter L."/>
            <person name="Beisel K.W."/>
            <person name="Bersano T."/>
            <person name="Bono H."/>
            <person name="Chalk A.M."/>
            <person name="Chiu K.P."/>
            <person name="Choudhary V."/>
            <person name="Christoffels A."/>
            <person name="Clutterbuck D.R."/>
            <person name="Crowe M.L."/>
            <person name="Dalla E."/>
            <person name="Dalrymple B.P."/>
            <person name="de Bono B."/>
            <person name="Della Gatta G."/>
            <person name="di Bernardo D."/>
            <person name="Down T."/>
            <person name="Engstrom P."/>
            <person name="Fagiolini M."/>
            <person name="Faulkner G."/>
            <person name="Fletcher C.F."/>
            <person name="Fukushima T."/>
            <person name="Furuno M."/>
            <person name="Futaki S."/>
            <person name="Gariboldi M."/>
            <person name="Georgii-Hemming P."/>
            <person name="Gingeras T.R."/>
            <person name="Gojobori T."/>
            <person name="Green R.E."/>
            <person name="Gustincich S."/>
            <person name="Harbers M."/>
            <person name="Hayashi Y."/>
            <person name="Hensch T.K."/>
            <person name="Hirokawa N."/>
            <person name="Hill D."/>
            <person name="Huminiecki L."/>
            <person name="Iacono M."/>
            <person name="Ikeo K."/>
            <person name="Iwama A."/>
            <person name="Ishikawa T."/>
            <person name="Jakt M."/>
            <person name="Kanapin A."/>
            <person name="Katoh M."/>
            <person name="Kawasawa Y."/>
            <person name="Kelso J."/>
            <person name="Kitamura H."/>
            <person name="Kitano H."/>
            <person name="Kollias G."/>
            <person name="Krishnan S.P."/>
            <person name="Kruger A."/>
            <person name="Kummerfeld S.K."/>
            <person name="Kurochkin I.V."/>
            <person name="Lareau L.F."/>
            <person name="Lazarevic D."/>
            <person name="Lipovich L."/>
            <person name="Liu J."/>
            <person name="Liuni S."/>
            <person name="McWilliam S."/>
            <person name="Madan Babu M."/>
            <person name="Madera M."/>
            <person name="Marchionni L."/>
            <person name="Matsuda H."/>
            <person name="Matsuzawa S."/>
            <person name="Miki H."/>
            <person name="Mignone F."/>
            <person name="Miyake S."/>
            <person name="Morris K."/>
            <person name="Mottagui-Tabar S."/>
            <person name="Mulder N."/>
            <person name="Nakano N."/>
            <person name="Nakauchi H."/>
            <person name="Ng P."/>
            <person name="Nilsson R."/>
            <person name="Nishiguchi S."/>
            <person name="Nishikawa S."/>
            <person name="Nori F."/>
            <person name="Ohara O."/>
            <person name="Okazaki Y."/>
            <person name="Orlando V."/>
            <person name="Pang K.C."/>
            <person name="Pavan W.J."/>
            <person name="Pavesi G."/>
            <person name="Pesole G."/>
            <person name="Petrovsky N."/>
            <person name="Piazza S."/>
            <person name="Reed J."/>
            <person name="Reid J.F."/>
            <person name="Ring B.Z."/>
            <person name="Ringwald M."/>
            <person name="Rost B."/>
            <person name="Ruan Y."/>
            <person name="Salzberg S.L."/>
            <person name="Sandelin A."/>
            <person name="Schneider C."/>
            <person name="Schoenbach C."/>
            <person name="Sekiguchi K."/>
            <person name="Semple C.A."/>
            <person name="Seno S."/>
            <person name="Sessa L."/>
            <person name="Sheng Y."/>
            <person name="Shibata Y."/>
            <person name="Shimada H."/>
            <person name="Shimada K."/>
            <person name="Silva D."/>
            <person name="Sinclair B."/>
            <person name="Sperling S."/>
            <person name="Stupka E."/>
            <person name="Sugiura K."/>
            <person name="Sultana R."/>
            <person name="Takenaka Y."/>
            <person name="Taki K."/>
            <person name="Tammoja K."/>
            <person name="Tan S.L."/>
            <person name="Tang S."/>
            <person name="Taylor M.S."/>
            <person name="Tegner J."/>
            <person name="Teichmann S.A."/>
            <person name="Ueda H.R."/>
            <person name="van Nimwegen E."/>
            <person name="Verardo R."/>
            <person name="Wei C.L."/>
            <person name="Yagi K."/>
            <person name="Yamanishi H."/>
            <person name="Zabarovsky E."/>
            <person name="Zhu S."/>
            <person name="Zimmer A."/>
            <person name="Hide W."/>
            <person name="Bult C."/>
            <person name="Grimmond S.M."/>
            <person name="Teasdale R.D."/>
            <person name="Liu E.T."/>
            <person name="Brusic V."/>
            <person name="Quackenbush J."/>
            <person name="Wahlestedt C."/>
            <person name="Mattick J.S."/>
            <person name="Hume D.A."/>
            <person name="Kai C."/>
            <person name="Sasaki D."/>
            <person name="Tomaru Y."/>
            <person name="Fukuda S."/>
            <person name="Kanamori-Katayama M."/>
            <person name="Suzuki M."/>
            <person name="Aoki J."/>
            <person name="Arakawa T."/>
            <person name="Iida J."/>
            <person name="Imamura K."/>
            <person name="Itoh M."/>
            <person name="Kato T."/>
            <person name="Kawaji H."/>
            <person name="Kawagashira N."/>
            <person name="Kawashima T."/>
            <person name="Kojima M."/>
            <person name="Kondo S."/>
            <person name="Konno H."/>
            <person name="Nakano K."/>
            <person name="Ninomiya N."/>
            <person name="Nishio T."/>
            <person name="Okada M."/>
            <person name="Plessy C."/>
            <person name="Shibata K."/>
            <person name="Shiraki T."/>
            <person name="Suzuki S."/>
            <person name="Tagami M."/>
            <person name="Waki K."/>
            <person name="Watahiki A."/>
            <person name="Okamura-Oho Y."/>
            <person name="Suzuki H."/>
            <person name="Kawai J."/>
            <person name="Hayashizaki Y."/>
        </authorList>
    </citation>
    <scope>NUCLEOTIDE SEQUENCE [LARGE SCALE MRNA]</scope>
    <source>
        <strain>NOD</strain>
    </source>
</reference>
<reference key="3">
    <citation type="journal article" date="2004" name="Genome Res.">
        <title>The status, quality, and expansion of the NIH full-length cDNA project: the Mammalian Gene Collection (MGC).</title>
        <authorList>
            <consortium name="The MGC Project Team"/>
        </authorList>
    </citation>
    <scope>NUCLEOTIDE SEQUENCE [LARGE SCALE MRNA]</scope>
    <source>
        <strain>Czech II</strain>
        <tissue>Mammary tumor</tissue>
    </source>
</reference>
<reference key="4">
    <citation type="journal article" date="2003" name="DNA Res.">
        <title>Prediction of the coding sequences of mouse homologues of KIAA gene: II. The complete nucleotide sequences of 400 mouse KIAA-homologous cDNAs identified by screening of terminal sequences of cDNA clones randomly sampled from size-fractionated libraries.</title>
        <authorList>
            <person name="Okazaki N."/>
            <person name="Kikuno R."/>
            <person name="Ohara R."/>
            <person name="Inamoto S."/>
            <person name="Aizawa H."/>
            <person name="Yuasa S."/>
            <person name="Nakajima D."/>
            <person name="Nagase T."/>
            <person name="Ohara O."/>
            <person name="Koga H."/>
        </authorList>
    </citation>
    <scope>NUCLEOTIDE SEQUENCE [LARGE SCALE MRNA] OF 240-1128</scope>
    <source>
        <tissue>Brain</tissue>
    </source>
</reference>
<reference key="5">
    <citation type="journal article" date="2004" name="Mol. Cell. Proteomics">
        <title>Phosphoproteomic analysis of the developing mouse brain.</title>
        <authorList>
            <person name="Ballif B.A."/>
            <person name="Villen J."/>
            <person name="Beausoleil S.A."/>
            <person name="Schwartz D."/>
            <person name="Gygi S.P."/>
        </authorList>
    </citation>
    <scope>IDENTIFICATION BY MASS SPECTROMETRY [LARGE SCALE ANALYSIS]</scope>
    <source>
        <tissue>Embryonic brain</tissue>
    </source>
</reference>
<reference key="6">
    <citation type="journal article" date="2007" name="Proc. Natl. Acad. Sci. U.S.A.">
        <title>Large-scale phosphorylation analysis of mouse liver.</title>
        <authorList>
            <person name="Villen J."/>
            <person name="Beausoleil S.A."/>
            <person name="Gerber S.A."/>
            <person name="Gygi S.P."/>
        </authorList>
    </citation>
    <scope>PHOSPHORYLATION [LARGE SCALE ANALYSIS] AT THR-585</scope>
    <scope>IDENTIFICATION BY MASS SPECTROMETRY [LARGE SCALE ANALYSIS]</scope>
    <source>
        <tissue>Liver</tissue>
    </source>
</reference>
<reference key="7">
    <citation type="journal article" date="2010" name="Cell">
        <title>A tissue-specific atlas of mouse protein phosphorylation and expression.</title>
        <authorList>
            <person name="Huttlin E.L."/>
            <person name="Jedrychowski M.P."/>
            <person name="Elias J.E."/>
            <person name="Goswami T."/>
            <person name="Rad R."/>
            <person name="Beausoleil S.A."/>
            <person name="Villen J."/>
            <person name="Haas W."/>
            <person name="Sowa M.E."/>
            <person name="Gygi S.P."/>
        </authorList>
    </citation>
    <scope>PHOSPHORYLATION [LARGE SCALE ANALYSIS] AT THR-85; THR-585 AND SER-1114</scope>
    <scope>IDENTIFICATION BY MASS SPECTROMETRY [LARGE SCALE ANALYSIS]</scope>
    <source>
        <tissue>Brain</tissue>
        <tissue>Heart</tissue>
        <tissue>Kidney</tissue>
        <tissue>Liver</tissue>
        <tissue>Lung</tissue>
        <tissue>Pancreas</tissue>
        <tissue>Spleen</tissue>
    </source>
</reference>
<dbReference type="EMBL" id="AB033615">
    <property type="protein sequence ID" value="BAA89457.1"/>
    <property type="molecule type" value="mRNA"/>
</dbReference>
<dbReference type="EMBL" id="AK154288">
    <property type="protein sequence ID" value="BAE32490.1"/>
    <property type="molecule type" value="mRNA"/>
</dbReference>
<dbReference type="EMBL" id="BC027746">
    <property type="protein sequence ID" value="AAH27746.1"/>
    <property type="molecule type" value="mRNA"/>
</dbReference>
<dbReference type="EMBL" id="AK122439">
    <property type="protein sequence ID" value="BAC65721.1"/>
    <property type="molecule type" value="mRNA"/>
</dbReference>
<dbReference type="CCDS" id="CCDS28875.1"/>
<dbReference type="RefSeq" id="NP_038908.2">
    <property type="nucleotide sequence ID" value="NM_013880.3"/>
</dbReference>
<dbReference type="RefSeq" id="XP_006524213.1">
    <property type="nucleotide sequence ID" value="XM_006524150.4"/>
</dbReference>
<dbReference type="RefSeq" id="XP_006524214.1">
    <property type="nucleotide sequence ID" value="XM_006524151.4"/>
</dbReference>
<dbReference type="RefSeq" id="XP_006524215.1">
    <property type="nucleotide sequence ID" value="XM_006524152.4"/>
</dbReference>
<dbReference type="SMR" id="Q8K394"/>
<dbReference type="BioGRID" id="230332">
    <property type="interactions" value="5"/>
</dbReference>
<dbReference type="FunCoup" id="Q8K394">
    <property type="interactions" value="305"/>
</dbReference>
<dbReference type="STRING" id="10090.ENSMUSP00000046584"/>
<dbReference type="GlyConnect" id="2386">
    <property type="glycosylation" value="1 N-Linked glycan (1 site)"/>
</dbReference>
<dbReference type="GlyCosmos" id="Q8K394">
    <property type="glycosylation" value="1 site, 1 glycan"/>
</dbReference>
<dbReference type="GlyGen" id="Q8K394">
    <property type="glycosylation" value="3 sites, 4 N-linked glycans (3 sites)"/>
</dbReference>
<dbReference type="iPTMnet" id="Q8K394"/>
<dbReference type="PhosphoSitePlus" id="Q8K394"/>
<dbReference type="SwissPalm" id="Q8K394"/>
<dbReference type="jPOST" id="Q8K394"/>
<dbReference type="PaxDb" id="10090-ENSMUSP00000046584"/>
<dbReference type="PeptideAtlas" id="Q8K394"/>
<dbReference type="ProteomicsDB" id="289925"/>
<dbReference type="Antibodypedia" id="26950">
    <property type="antibodies" value="150 antibodies from 29 providers"/>
</dbReference>
<dbReference type="DNASU" id="224860"/>
<dbReference type="Ensembl" id="ENSMUST00000043938.8">
    <property type="protein sequence ID" value="ENSMUSP00000046584.7"/>
    <property type="gene ID" value="ENSMUSG00000038910.8"/>
</dbReference>
<dbReference type="GeneID" id="224860"/>
<dbReference type="KEGG" id="mmu:224860"/>
<dbReference type="UCSC" id="uc012avf.1">
    <property type="organism name" value="mouse"/>
</dbReference>
<dbReference type="AGR" id="MGI:1352756"/>
<dbReference type="CTD" id="23228"/>
<dbReference type="MGI" id="MGI:1352756">
    <property type="gene designation" value="Plcl2"/>
</dbReference>
<dbReference type="VEuPathDB" id="HostDB:ENSMUSG00000038910"/>
<dbReference type="eggNOG" id="KOG0169">
    <property type="taxonomic scope" value="Eukaryota"/>
</dbReference>
<dbReference type="GeneTree" id="ENSGT00940000155660"/>
<dbReference type="HOGENOM" id="CLU_002738_0_1_1"/>
<dbReference type="InParanoid" id="Q8K394"/>
<dbReference type="OMA" id="MRTSWIS"/>
<dbReference type="OrthoDB" id="269822at2759"/>
<dbReference type="PhylomeDB" id="Q8K394"/>
<dbReference type="TreeFam" id="TF313216"/>
<dbReference type="BioGRID-ORCS" id="224860">
    <property type="hits" value="5 hits in 79 CRISPR screens"/>
</dbReference>
<dbReference type="CD-CODE" id="CE726F99">
    <property type="entry name" value="Postsynaptic density"/>
</dbReference>
<dbReference type="ChiTaRS" id="Plcl2">
    <property type="organism name" value="mouse"/>
</dbReference>
<dbReference type="PRO" id="PR:Q8K394"/>
<dbReference type="Proteomes" id="UP000000589">
    <property type="component" value="Chromosome 17"/>
</dbReference>
<dbReference type="RNAct" id="Q8K394">
    <property type="molecule type" value="protein"/>
</dbReference>
<dbReference type="Bgee" id="ENSMUSG00000038910">
    <property type="expression patterns" value="Expressed in caudate-putamen and 252 other cell types or tissues"/>
</dbReference>
<dbReference type="GO" id="GO:0005737">
    <property type="term" value="C:cytoplasm"/>
    <property type="evidence" value="ECO:0007669"/>
    <property type="project" value="UniProtKB-SubCell"/>
</dbReference>
<dbReference type="GO" id="GO:0050811">
    <property type="term" value="F:GABA receptor binding"/>
    <property type="evidence" value="ECO:0000266"/>
    <property type="project" value="MGI"/>
</dbReference>
<dbReference type="GO" id="GO:0070679">
    <property type="term" value="F:inositol 1,4,5 trisphosphate binding"/>
    <property type="evidence" value="ECO:0007669"/>
    <property type="project" value="InterPro"/>
</dbReference>
<dbReference type="GO" id="GO:0004435">
    <property type="term" value="F:phosphatidylinositol-4,5-bisphosphate phospholipase C activity"/>
    <property type="evidence" value="ECO:0007669"/>
    <property type="project" value="InterPro"/>
</dbReference>
<dbReference type="GO" id="GO:0002322">
    <property type="term" value="P:B cell proliferation involved in immune response"/>
    <property type="evidence" value="ECO:0000315"/>
    <property type="project" value="MGI"/>
</dbReference>
<dbReference type="GO" id="GO:0002337">
    <property type="term" value="P:B-1a B cell differentiation"/>
    <property type="evidence" value="ECO:0000315"/>
    <property type="project" value="MGI"/>
</dbReference>
<dbReference type="GO" id="GO:0007214">
    <property type="term" value="P:gamma-aminobutyric acid signaling pathway"/>
    <property type="evidence" value="ECO:0000316"/>
    <property type="project" value="MGI"/>
</dbReference>
<dbReference type="GO" id="GO:0035556">
    <property type="term" value="P:intracellular signal transduction"/>
    <property type="evidence" value="ECO:0007669"/>
    <property type="project" value="InterPro"/>
</dbReference>
<dbReference type="GO" id="GO:0006629">
    <property type="term" value="P:lipid metabolic process"/>
    <property type="evidence" value="ECO:0007669"/>
    <property type="project" value="InterPro"/>
</dbReference>
<dbReference type="GO" id="GO:0050859">
    <property type="term" value="P:negative regulation of B cell receptor signaling pathway"/>
    <property type="evidence" value="ECO:0000315"/>
    <property type="project" value="MGI"/>
</dbReference>
<dbReference type="GO" id="GO:0120163">
    <property type="term" value="P:negative regulation of cold-induced thermogenesis"/>
    <property type="evidence" value="ECO:0000316"/>
    <property type="project" value="YuBioLab"/>
</dbReference>
<dbReference type="GO" id="GO:0032228">
    <property type="term" value="P:regulation of synaptic transmission, GABAergic"/>
    <property type="evidence" value="ECO:0000316"/>
    <property type="project" value="MGI"/>
</dbReference>
<dbReference type="CDD" id="cd00275">
    <property type="entry name" value="C2_PLC_like"/>
    <property type="match status" value="1"/>
</dbReference>
<dbReference type="CDD" id="cd16223">
    <property type="entry name" value="EFh_PRIP2"/>
    <property type="match status" value="1"/>
</dbReference>
<dbReference type="CDD" id="cd13364">
    <property type="entry name" value="PH_PLC_eta"/>
    <property type="match status" value="1"/>
</dbReference>
<dbReference type="CDD" id="cd08597">
    <property type="entry name" value="PI-PLCc_PRIP_metazoa"/>
    <property type="match status" value="1"/>
</dbReference>
<dbReference type="FunFam" id="1.10.238.10:FF:000005">
    <property type="entry name" value="Phosphoinositide phospholipase C"/>
    <property type="match status" value="1"/>
</dbReference>
<dbReference type="FunFam" id="2.30.29.30:FF:000025">
    <property type="entry name" value="Phosphoinositide phospholipase C"/>
    <property type="match status" value="1"/>
</dbReference>
<dbReference type="FunFam" id="2.60.40.150:FF:000017">
    <property type="entry name" value="Phosphoinositide phospholipase C"/>
    <property type="match status" value="1"/>
</dbReference>
<dbReference type="FunFam" id="3.20.20.190:FF:000001">
    <property type="entry name" value="Phosphoinositide phospholipase C"/>
    <property type="match status" value="1"/>
</dbReference>
<dbReference type="Gene3D" id="2.60.40.150">
    <property type="entry name" value="C2 domain"/>
    <property type="match status" value="1"/>
</dbReference>
<dbReference type="Gene3D" id="1.10.238.10">
    <property type="entry name" value="EF-hand"/>
    <property type="match status" value="2"/>
</dbReference>
<dbReference type="Gene3D" id="3.20.20.190">
    <property type="entry name" value="Phosphatidylinositol (PI) phosphodiesterase"/>
    <property type="match status" value="1"/>
</dbReference>
<dbReference type="Gene3D" id="2.30.29.30">
    <property type="entry name" value="Pleckstrin-homology domain (PH domain)/Phosphotyrosine-binding domain (PTB)"/>
    <property type="match status" value="1"/>
</dbReference>
<dbReference type="InterPro" id="IPR000008">
    <property type="entry name" value="C2_dom"/>
</dbReference>
<dbReference type="InterPro" id="IPR035892">
    <property type="entry name" value="C2_domain_sf"/>
</dbReference>
<dbReference type="InterPro" id="IPR011992">
    <property type="entry name" value="EF-hand-dom_pair"/>
</dbReference>
<dbReference type="InterPro" id="IPR011993">
    <property type="entry name" value="PH-like_dom_sf"/>
</dbReference>
<dbReference type="InterPro" id="IPR001849">
    <property type="entry name" value="PH_domain"/>
</dbReference>
<dbReference type="InterPro" id="IPR001192">
    <property type="entry name" value="PI-PLC_fam"/>
</dbReference>
<dbReference type="InterPro" id="IPR017946">
    <property type="entry name" value="PLC-like_Pdiesterase_TIM-brl"/>
</dbReference>
<dbReference type="InterPro" id="IPR015359">
    <property type="entry name" value="PLC_EF-hand-like"/>
</dbReference>
<dbReference type="InterPro" id="IPR028382">
    <property type="entry name" value="PLCL2_EFh"/>
</dbReference>
<dbReference type="InterPro" id="IPR000909">
    <property type="entry name" value="PLipase_C_PInositol-sp_X_dom"/>
</dbReference>
<dbReference type="InterPro" id="IPR001711">
    <property type="entry name" value="PLipase_C_Pinositol-sp_Y"/>
</dbReference>
<dbReference type="PANTHER" id="PTHR10336:SF84">
    <property type="entry name" value="INACTIVE PHOSPHOLIPASE C-LIKE PROTEIN 2"/>
    <property type="match status" value="1"/>
</dbReference>
<dbReference type="PANTHER" id="PTHR10336">
    <property type="entry name" value="PHOSPHOINOSITIDE-SPECIFIC PHOSPHOLIPASE C FAMILY PROTEIN"/>
    <property type="match status" value="1"/>
</dbReference>
<dbReference type="Pfam" id="PF00168">
    <property type="entry name" value="C2"/>
    <property type="match status" value="1"/>
</dbReference>
<dbReference type="Pfam" id="PF09279">
    <property type="entry name" value="EF-hand_like"/>
    <property type="match status" value="1"/>
</dbReference>
<dbReference type="Pfam" id="PF16457">
    <property type="entry name" value="PH_12"/>
    <property type="match status" value="1"/>
</dbReference>
<dbReference type="Pfam" id="PF00388">
    <property type="entry name" value="PI-PLC-X"/>
    <property type="match status" value="1"/>
</dbReference>
<dbReference type="Pfam" id="PF00387">
    <property type="entry name" value="PI-PLC-Y"/>
    <property type="match status" value="1"/>
</dbReference>
<dbReference type="PRINTS" id="PR00390">
    <property type="entry name" value="PHPHLIPASEC"/>
</dbReference>
<dbReference type="SMART" id="SM00239">
    <property type="entry name" value="C2"/>
    <property type="match status" value="1"/>
</dbReference>
<dbReference type="SMART" id="SM00233">
    <property type="entry name" value="PH"/>
    <property type="match status" value="1"/>
</dbReference>
<dbReference type="SMART" id="SM00148">
    <property type="entry name" value="PLCXc"/>
    <property type="match status" value="1"/>
</dbReference>
<dbReference type="SMART" id="SM00149">
    <property type="entry name" value="PLCYc"/>
    <property type="match status" value="1"/>
</dbReference>
<dbReference type="SUPFAM" id="SSF49562">
    <property type="entry name" value="C2 domain (Calcium/lipid-binding domain, CaLB)"/>
    <property type="match status" value="1"/>
</dbReference>
<dbReference type="SUPFAM" id="SSF47473">
    <property type="entry name" value="EF-hand"/>
    <property type="match status" value="1"/>
</dbReference>
<dbReference type="SUPFAM" id="SSF50729">
    <property type="entry name" value="PH domain-like"/>
    <property type="match status" value="1"/>
</dbReference>
<dbReference type="SUPFAM" id="SSF51695">
    <property type="entry name" value="PLC-like phosphodiesterases"/>
    <property type="match status" value="1"/>
</dbReference>
<dbReference type="PROSITE" id="PS50004">
    <property type="entry name" value="C2"/>
    <property type="match status" value="1"/>
</dbReference>
<dbReference type="PROSITE" id="PS50003">
    <property type="entry name" value="PH_DOMAIN"/>
    <property type="match status" value="1"/>
</dbReference>
<dbReference type="PROSITE" id="PS50007">
    <property type="entry name" value="PIPLC_X_DOMAIN"/>
    <property type="match status" value="1"/>
</dbReference>
<dbReference type="PROSITE" id="PS50008">
    <property type="entry name" value="PIPLC_Y_DOMAIN"/>
    <property type="match status" value="1"/>
</dbReference>
<gene>
    <name type="primary">Plcl2</name>
    <name type="synonym">Kiaa1092</name>
    <name type="synonym">Plce2</name>
</gene>